<name>MBP1_YEAST</name>
<gene>
    <name type="primary">MBP1</name>
    <name type="ordered locus">YDL056W</name>
</gene>
<sequence length="833" mass="93908">MSNQIYSARYSGVDVYEFIHSTGSIMKRKKDDWVNATHILKAANFAKAKRTRILEKEVLKETHEKVQGGFGKYQGTWVPLNIAKQLAEKFSVYDQLKPLFDFTQTDGSASPPPAPKHHHASKVDRKKAIRSASTSAIMETKRNNKKAEENQFQSSKILGNPTAAPRKRGRPVGSTRGSRRKLGVNLQRSQSDMGFPRPAIPNSSISTTQLPSIRSTMGPQSPTLGILEEERHDSRQQQPQQNNSAQFKEIDLEDGLSSDVEPSQQLQQVFNQNTGFVPQQQSSLIQTQQTESMATSVSSSPSLPTSPGDFADSNPFEERFPGGGTSPIISMIPRYPVTSRPQTSDINDKVNKYLSKLVDYFISNEMKSNKSLPQVLLHPPPHSAPYIDAPIDPELHTAFHWACSMGNLPIAEALYEAGTSIRSTNSQGQTPLMRSSLFHNSYTRRTFPRIFQLLHETVFDIDSQSQTVIHHIVKRKSTTPSAVYYLDVVLSKIKDFSPQYRIELLLNTQDKNGDTALHIASKNGDVVFFNTLVKMGALTTISNKEGLTANEIMNQQYEQMMIQNGTNQHVNSSNTDLNIHVNTNNIETKNDVNSMVIMSPVSPSDYITYPSQIATNISRNIPNVVNSMKQMASIYNDLHEQHDNEIKSLQKTLKSISKTKIQVSLKTLEVLKESSKDENGEAQTNDDFEILSRLQEQNTKKLRKRLIRYKRLIKQKLEYRQTVLLNKLIEDETQATTNNTVEKDNNTLERLELAQELTMLQLQRKNKLSSLVKKFEDNAKIHKYRRIIREGTEMNIEEVDSSLDVILQTLIANNNKNKGAEQIITISNANSHA</sequence>
<proteinExistence type="evidence at protein level"/>
<organism>
    <name type="scientific">Saccharomyces cerevisiae (strain ATCC 204508 / S288c)</name>
    <name type="common">Baker's yeast</name>
    <dbReference type="NCBI Taxonomy" id="559292"/>
    <lineage>
        <taxon>Eukaryota</taxon>
        <taxon>Fungi</taxon>
        <taxon>Dikarya</taxon>
        <taxon>Ascomycota</taxon>
        <taxon>Saccharomycotina</taxon>
        <taxon>Saccharomycetes</taxon>
        <taxon>Saccharomycetales</taxon>
        <taxon>Saccharomycetaceae</taxon>
        <taxon>Saccharomyces</taxon>
    </lineage>
</organism>
<keyword id="KW-0002">3D-structure</keyword>
<keyword id="KW-0010">Activator</keyword>
<keyword id="KW-0040">ANK repeat</keyword>
<keyword id="KW-0903">Direct protein sequencing</keyword>
<keyword id="KW-0238">DNA-binding</keyword>
<keyword id="KW-0539">Nucleus</keyword>
<keyword id="KW-0597">Phosphoprotein</keyword>
<keyword id="KW-1185">Reference proteome</keyword>
<keyword id="KW-0677">Repeat</keyword>
<keyword id="KW-0804">Transcription</keyword>
<keyword id="KW-0805">Transcription regulation</keyword>
<feature type="chain" id="PRO_0000067062" description="Transcription factor MBP1">
    <location>
        <begin position="1"/>
        <end position="833"/>
    </location>
</feature>
<feature type="domain" description="HTH APSES-type" evidence="1">
    <location>
        <begin position="5"/>
        <end position="111"/>
    </location>
</feature>
<feature type="repeat" description="ANK 1">
    <location>
        <begin position="394"/>
        <end position="423"/>
    </location>
</feature>
<feature type="repeat" description="ANK 2">
    <location>
        <begin position="512"/>
        <end position="541"/>
    </location>
</feature>
<feature type="DNA-binding region" description="H-T-H motif" evidence="1">
    <location>
        <begin position="36"/>
        <end position="57"/>
    </location>
</feature>
<feature type="region of interest" description="Disordered" evidence="2">
    <location>
        <begin position="104"/>
        <end position="223"/>
    </location>
</feature>
<feature type="region of interest" description="Disordered" evidence="2">
    <location>
        <begin position="280"/>
        <end position="329"/>
    </location>
</feature>
<feature type="compositionally biased region" description="Basic residues" evidence="2">
    <location>
        <begin position="115"/>
        <end position="129"/>
    </location>
</feature>
<feature type="compositionally biased region" description="Basic and acidic residues" evidence="2">
    <location>
        <begin position="139"/>
        <end position="149"/>
    </location>
</feature>
<feature type="compositionally biased region" description="Polar residues" evidence="2">
    <location>
        <begin position="201"/>
        <end position="223"/>
    </location>
</feature>
<feature type="compositionally biased region" description="Low complexity" evidence="2">
    <location>
        <begin position="280"/>
        <end position="307"/>
    </location>
</feature>
<feature type="modified residue" description="Phosphoserine" evidence="5 6">
    <location>
        <position position="110"/>
    </location>
</feature>
<feature type="modified residue" description="Phosphothreonine" evidence="6">
    <location>
        <position position="325"/>
    </location>
</feature>
<feature type="modified residue" description="Phosphoserine" evidence="6">
    <location>
        <position position="326"/>
    </location>
</feature>
<feature type="modified residue" description="Phosphoserine" evidence="6">
    <location>
        <position position="330"/>
    </location>
</feature>
<feature type="modified residue" description="Phosphoserine" evidence="5">
    <location>
        <position position="827"/>
    </location>
</feature>
<feature type="strand" evidence="7">
    <location>
        <begin position="5"/>
        <end position="10"/>
    </location>
</feature>
<feature type="strand" evidence="7">
    <location>
        <begin position="13"/>
        <end position="19"/>
    </location>
</feature>
<feature type="strand" evidence="7">
    <location>
        <begin position="24"/>
        <end position="28"/>
    </location>
</feature>
<feature type="turn" evidence="7">
    <location>
        <begin position="29"/>
        <end position="31"/>
    </location>
</feature>
<feature type="strand" evidence="8">
    <location>
        <begin position="33"/>
        <end position="35"/>
    </location>
</feature>
<feature type="helix" evidence="7">
    <location>
        <begin position="36"/>
        <end position="42"/>
    </location>
</feature>
<feature type="helix" evidence="7">
    <location>
        <begin position="47"/>
        <end position="57"/>
    </location>
</feature>
<feature type="turn" evidence="7">
    <location>
        <begin position="58"/>
        <end position="60"/>
    </location>
</feature>
<feature type="strand" evidence="7">
    <location>
        <begin position="64"/>
        <end position="69"/>
    </location>
</feature>
<feature type="turn" evidence="9">
    <location>
        <begin position="71"/>
        <end position="73"/>
    </location>
</feature>
<feature type="strand" evidence="7">
    <location>
        <begin position="75"/>
        <end position="78"/>
    </location>
</feature>
<feature type="helix" evidence="7">
    <location>
        <begin position="80"/>
        <end position="89"/>
    </location>
</feature>
<feature type="helix" evidence="7">
    <location>
        <begin position="93"/>
        <end position="101"/>
    </location>
</feature>
<reference key="1">
    <citation type="journal article" date="1993" name="Science">
        <title>A role for the transcription factors Mbp1 and Swi4 in progression from G1 to S phase.</title>
        <authorList>
            <person name="Koch C."/>
            <person name="Moll T."/>
            <person name="Neuberg M."/>
            <person name="Ahorn H."/>
            <person name="Nasmyth K."/>
        </authorList>
    </citation>
    <scope>NUCLEOTIDE SEQUENCE [GENOMIC DNA]</scope>
    <scope>PROTEIN SEQUENCE OF 372-387</scope>
    <source>
        <strain>K1107</strain>
    </source>
</reference>
<reference key="2">
    <citation type="journal article" date="1997" name="Nature">
        <title>The nucleotide sequence of Saccharomyces cerevisiae chromosome IV.</title>
        <authorList>
            <person name="Jacq C."/>
            <person name="Alt-Moerbe J."/>
            <person name="Andre B."/>
            <person name="Arnold W."/>
            <person name="Bahr A."/>
            <person name="Ballesta J.P.G."/>
            <person name="Bargues M."/>
            <person name="Baron L."/>
            <person name="Becker A."/>
            <person name="Biteau N."/>
            <person name="Bloecker H."/>
            <person name="Blugeon C."/>
            <person name="Boskovic J."/>
            <person name="Brandt P."/>
            <person name="Brueckner M."/>
            <person name="Buitrago M.J."/>
            <person name="Coster F."/>
            <person name="Delaveau T."/>
            <person name="del Rey F."/>
            <person name="Dujon B."/>
            <person name="Eide L.G."/>
            <person name="Garcia-Cantalejo J.M."/>
            <person name="Goffeau A."/>
            <person name="Gomez-Peris A."/>
            <person name="Granotier C."/>
            <person name="Hanemann V."/>
            <person name="Hankeln T."/>
            <person name="Hoheisel J.D."/>
            <person name="Jaeger W."/>
            <person name="Jimenez A."/>
            <person name="Jonniaux J.-L."/>
            <person name="Kraemer C."/>
            <person name="Kuester H."/>
            <person name="Laamanen P."/>
            <person name="Legros Y."/>
            <person name="Louis E.J."/>
            <person name="Moeller-Rieker S."/>
            <person name="Monnet A."/>
            <person name="Moro M."/>
            <person name="Mueller-Auer S."/>
            <person name="Nussbaumer B."/>
            <person name="Paricio N."/>
            <person name="Paulin L."/>
            <person name="Perea J."/>
            <person name="Perez-Alonso M."/>
            <person name="Perez-Ortin J.E."/>
            <person name="Pohl T.M."/>
            <person name="Prydz H."/>
            <person name="Purnelle B."/>
            <person name="Rasmussen S.W."/>
            <person name="Remacha M.A."/>
            <person name="Revuelta J.L."/>
            <person name="Rieger M."/>
            <person name="Salom D."/>
            <person name="Saluz H.P."/>
            <person name="Saiz J.E."/>
            <person name="Saren A.-M."/>
            <person name="Schaefer M."/>
            <person name="Scharfe M."/>
            <person name="Schmidt E.R."/>
            <person name="Schneider C."/>
            <person name="Scholler P."/>
            <person name="Schwarz S."/>
            <person name="Soler-Mira A."/>
            <person name="Urrestarazu L.A."/>
            <person name="Verhasselt P."/>
            <person name="Vissers S."/>
            <person name="Voet M."/>
            <person name="Volckaert G."/>
            <person name="Wagner G."/>
            <person name="Wambutt R."/>
            <person name="Wedler E."/>
            <person name="Wedler H."/>
            <person name="Woelfl S."/>
            <person name="Harris D.E."/>
            <person name="Bowman S."/>
            <person name="Brown D."/>
            <person name="Churcher C.M."/>
            <person name="Connor R."/>
            <person name="Dedman K."/>
            <person name="Gentles S."/>
            <person name="Hamlin N."/>
            <person name="Hunt S."/>
            <person name="Jones L."/>
            <person name="McDonald S."/>
            <person name="Murphy L.D."/>
            <person name="Niblett D."/>
            <person name="Odell C."/>
            <person name="Oliver K."/>
            <person name="Rajandream M.A."/>
            <person name="Richards C."/>
            <person name="Shore L."/>
            <person name="Walsh S.V."/>
            <person name="Barrell B.G."/>
            <person name="Dietrich F.S."/>
            <person name="Mulligan J.T."/>
            <person name="Allen E."/>
            <person name="Araujo R."/>
            <person name="Aviles E."/>
            <person name="Berno A."/>
            <person name="Carpenter J."/>
            <person name="Chen E."/>
            <person name="Cherry J.M."/>
            <person name="Chung E."/>
            <person name="Duncan M."/>
            <person name="Hunicke-Smith S."/>
            <person name="Hyman R.W."/>
            <person name="Komp C."/>
            <person name="Lashkari D."/>
            <person name="Lew H."/>
            <person name="Lin D."/>
            <person name="Mosedale D."/>
            <person name="Nakahara K."/>
            <person name="Namath A."/>
            <person name="Oefner P."/>
            <person name="Oh C."/>
            <person name="Petel F.X."/>
            <person name="Roberts D."/>
            <person name="Schramm S."/>
            <person name="Schroeder M."/>
            <person name="Shogren T."/>
            <person name="Shroff N."/>
            <person name="Winant A."/>
            <person name="Yelton M.A."/>
            <person name="Botstein D."/>
            <person name="Davis R.W."/>
            <person name="Johnston M."/>
            <person name="Andrews S."/>
            <person name="Brinkman R."/>
            <person name="Cooper J."/>
            <person name="Ding H."/>
            <person name="Du Z."/>
            <person name="Favello A."/>
            <person name="Fulton L."/>
            <person name="Gattung S."/>
            <person name="Greco T."/>
            <person name="Hallsworth K."/>
            <person name="Hawkins J."/>
            <person name="Hillier L.W."/>
            <person name="Jier M."/>
            <person name="Johnson D."/>
            <person name="Johnston L."/>
            <person name="Kirsten J."/>
            <person name="Kucaba T."/>
            <person name="Langston Y."/>
            <person name="Latreille P."/>
            <person name="Le T."/>
            <person name="Mardis E."/>
            <person name="Menezes S."/>
            <person name="Miller N."/>
            <person name="Nhan M."/>
            <person name="Pauley A."/>
            <person name="Peluso D."/>
            <person name="Rifkin L."/>
            <person name="Riles L."/>
            <person name="Taich A."/>
            <person name="Trevaskis E."/>
            <person name="Vignati D."/>
            <person name="Wilcox L."/>
            <person name="Wohldman P."/>
            <person name="Vaudin M."/>
            <person name="Wilson R."/>
            <person name="Waterston R."/>
            <person name="Albermann K."/>
            <person name="Hani J."/>
            <person name="Heumann K."/>
            <person name="Kleine K."/>
            <person name="Mewes H.-W."/>
            <person name="Zollner A."/>
            <person name="Zaccaria P."/>
        </authorList>
    </citation>
    <scope>NUCLEOTIDE SEQUENCE [LARGE SCALE GENOMIC DNA]</scope>
    <source>
        <strain>ATCC 204508 / S288c</strain>
    </source>
</reference>
<reference key="3">
    <citation type="journal article" date="2014" name="G3 (Bethesda)">
        <title>The reference genome sequence of Saccharomyces cerevisiae: Then and now.</title>
        <authorList>
            <person name="Engel S.R."/>
            <person name="Dietrich F.S."/>
            <person name="Fisk D.G."/>
            <person name="Binkley G."/>
            <person name="Balakrishnan R."/>
            <person name="Costanzo M.C."/>
            <person name="Dwight S.S."/>
            <person name="Hitz B.C."/>
            <person name="Karra K."/>
            <person name="Nash R.S."/>
            <person name="Weng S."/>
            <person name="Wong E.D."/>
            <person name="Lloyd P."/>
            <person name="Skrzypek M.S."/>
            <person name="Miyasato S.R."/>
            <person name="Simison M."/>
            <person name="Cherry J.M."/>
        </authorList>
    </citation>
    <scope>GENOME REANNOTATION</scope>
    <source>
        <strain>ATCC 204508 / S288c</strain>
    </source>
</reference>
<reference key="4">
    <citation type="journal article" date="1996" name="Curr. Genet.">
        <title>Over-expression of S. cerevisiae G1 cyclins restores the viability of alg1 N-glycosylation mutants.</title>
        <authorList>
            <person name="Benton B.K."/>
            <person name="Plump S.D."/>
            <person name="Roos J."/>
            <person name="Lennarz W.J."/>
            <person name="Cross F.R."/>
        </authorList>
    </citation>
    <scope>NUCLEOTIDE SEQUENCE [GENOMIC DNA] OF 460-833</scope>
</reference>
<reference key="5">
    <citation type="journal article" date="2003" name="Nature">
        <title>Global analysis of protein expression in yeast.</title>
        <authorList>
            <person name="Ghaemmaghami S."/>
            <person name="Huh W.-K."/>
            <person name="Bower K."/>
            <person name="Howson R.W."/>
            <person name="Belle A."/>
            <person name="Dephoure N."/>
            <person name="O'Shea E.K."/>
            <person name="Weissman J.S."/>
        </authorList>
    </citation>
    <scope>LEVEL OF PROTEIN EXPRESSION [LARGE SCALE ANALYSIS]</scope>
</reference>
<reference key="6">
    <citation type="journal article" date="2007" name="J. Proteome Res.">
        <title>Large-scale phosphorylation analysis of alpha-factor-arrested Saccharomyces cerevisiae.</title>
        <authorList>
            <person name="Li X."/>
            <person name="Gerber S.A."/>
            <person name="Rudner A.D."/>
            <person name="Beausoleil S.A."/>
            <person name="Haas W."/>
            <person name="Villen J."/>
            <person name="Elias J.E."/>
            <person name="Gygi S.P."/>
        </authorList>
    </citation>
    <scope>IDENTIFICATION BY MASS SPECTROMETRY [LARGE SCALE ANALYSIS]</scope>
    <source>
        <strain>ADR376</strain>
    </source>
</reference>
<reference key="7">
    <citation type="journal article" date="2008" name="J. Biol. Chem.">
        <title>The SBF- and MBF-associated protein Msa1 is required for proper timing of G1-specific transcription in Saccharomyces cerevisiae.</title>
        <authorList>
            <person name="Ashe M."/>
            <person name="de Bruin R.A.M."/>
            <person name="Kalashnikova T."/>
            <person name="McDonald W.H."/>
            <person name="Yates J.R. III"/>
            <person name="Wittenberg C."/>
        </authorList>
    </citation>
    <scope>INTERACTION WITH MSA1</scope>
</reference>
<reference key="8">
    <citation type="journal article" date="2008" name="Mol. Cell. Proteomics">
        <title>A multidimensional chromatography technology for in-depth phosphoproteome analysis.</title>
        <authorList>
            <person name="Albuquerque C.P."/>
            <person name="Smolka M.B."/>
            <person name="Payne S.H."/>
            <person name="Bafna V."/>
            <person name="Eng J."/>
            <person name="Zhou H."/>
        </authorList>
    </citation>
    <scope>PHOSPHORYLATION [LARGE SCALE ANALYSIS] AT SER-110 AND SER-827</scope>
    <scope>IDENTIFICATION BY MASS SPECTROMETRY [LARGE SCALE ANALYSIS]</scope>
</reference>
<reference key="9">
    <citation type="journal article" date="2009" name="Science">
        <title>Global analysis of Cdk1 substrate phosphorylation sites provides insights into evolution.</title>
        <authorList>
            <person name="Holt L.J."/>
            <person name="Tuch B.B."/>
            <person name="Villen J."/>
            <person name="Johnson A.D."/>
            <person name="Gygi S.P."/>
            <person name="Morgan D.O."/>
        </authorList>
    </citation>
    <scope>PHOSPHORYLATION [LARGE SCALE ANALYSIS] AT SER-110; THR-325; SER-326 AND SER-330</scope>
    <scope>IDENTIFICATION BY MASS SPECTROMETRY [LARGE SCALE ANALYSIS]</scope>
</reference>
<reference key="10">
    <citation type="journal article" date="1997" name="J. Mol. Biol.">
        <title>The X-ray structure of the DNA-binding domain from the Saccharomyces cerevisiae cell-cycle transcription factor Mbp1 at 2.1-A resolution.</title>
        <authorList>
            <person name="Taylor I.A."/>
            <person name="Treiber M.K."/>
            <person name="Olivi L."/>
            <person name="Smerdon S.J."/>
        </authorList>
    </citation>
    <scope>X-RAY CRYSTALLOGRAPHY (2.1 ANGSTROMS) OF 1-100</scope>
</reference>
<reference key="11">
    <citation type="journal article" date="1997" name="Structure">
        <title>Crystal structure of the DNA-binding domain of Mbp1, a transcription factor important in cell-cycle control of DNA synthesis.</title>
        <authorList>
            <person name="Xu R.M."/>
            <person name="Koch C."/>
            <person name="Liu Y."/>
            <person name="Horton J.R."/>
            <person name="Knapp D."/>
            <person name="Nasmyth K."/>
            <person name="Cheng X."/>
        </authorList>
    </citation>
    <scope>X-RAY CRYSTALLOGRAPHY (1.71 ANGSTROMS) OF 1-102</scope>
</reference>
<protein>
    <recommendedName>
        <fullName>Transcription factor MBP1</fullName>
    </recommendedName>
    <alternativeName>
        <fullName>MBF subunit p120</fullName>
    </alternativeName>
</protein>
<dbReference type="EMBL" id="X74158">
    <property type="protein sequence ID" value="CAA52271.1"/>
    <property type="molecule type" value="Genomic_DNA"/>
</dbReference>
<dbReference type="EMBL" id="Z74104">
    <property type="protein sequence ID" value="CAA98618.1"/>
    <property type="molecule type" value="Genomic_DNA"/>
</dbReference>
<dbReference type="EMBL" id="U19608">
    <property type="protein sequence ID" value="AAC49290.1"/>
    <property type="molecule type" value="Genomic_DNA"/>
</dbReference>
<dbReference type="EMBL" id="BK006938">
    <property type="protein sequence ID" value="DAA11800.1"/>
    <property type="molecule type" value="Genomic_DNA"/>
</dbReference>
<dbReference type="PIR" id="A47528">
    <property type="entry name" value="A47528"/>
</dbReference>
<dbReference type="RefSeq" id="NP_010227.1">
    <property type="nucleotide sequence ID" value="NM_001180115.1"/>
</dbReference>
<dbReference type="PDB" id="1BM8">
    <property type="method" value="X-ray"/>
    <property type="resolution" value="1.71 A"/>
    <property type="chains" value="A=4-102"/>
</dbReference>
<dbReference type="PDB" id="1L3G">
    <property type="method" value="NMR"/>
    <property type="chains" value="A=2-124"/>
</dbReference>
<dbReference type="PDB" id="1MB1">
    <property type="method" value="X-ray"/>
    <property type="resolution" value="2.10 A"/>
    <property type="chains" value="A=1-124"/>
</dbReference>
<dbReference type="PDBsum" id="1BM8"/>
<dbReference type="PDBsum" id="1L3G"/>
<dbReference type="PDBsum" id="1MB1"/>
<dbReference type="BMRB" id="P39678"/>
<dbReference type="SMR" id="P39678"/>
<dbReference type="BioGRID" id="32002">
    <property type="interactions" value="171"/>
</dbReference>
<dbReference type="ComplexPortal" id="CPX-950">
    <property type="entry name" value="MBP transcription complex"/>
</dbReference>
<dbReference type="DIP" id="DIP-2391N"/>
<dbReference type="FunCoup" id="P39678">
    <property type="interactions" value="1188"/>
</dbReference>
<dbReference type="IntAct" id="P39678">
    <property type="interactions" value="30"/>
</dbReference>
<dbReference type="MINT" id="P39678"/>
<dbReference type="STRING" id="4932.YDL056W"/>
<dbReference type="GlyGen" id="P39678">
    <property type="glycosylation" value="1 site, 1 O-linked glycan (1 site)"/>
</dbReference>
<dbReference type="iPTMnet" id="P39678"/>
<dbReference type="PaxDb" id="4932-YDL056W"/>
<dbReference type="PeptideAtlas" id="P39678"/>
<dbReference type="EnsemblFungi" id="YDL056W_mRNA">
    <property type="protein sequence ID" value="YDL056W"/>
    <property type="gene ID" value="YDL056W"/>
</dbReference>
<dbReference type="GeneID" id="851503"/>
<dbReference type="KEGG" id="sce:YDL056W"/>
<dbReference type="AGR" id="SGD:S000002214"/>
<dbReference type="SGD" id="S000002214">
    <property type="gene designation" value="MBP1"/>
</dbReference>
<dbReference type="VEuPathDB" id="FungiDB:YDL056W"/>
<dbReference type="eggNOG" id="KOG4177">
    <property type="taxonomic scope" value="Eukaryota"/>
</dbReference>
<dbReference type="HOGENOM" id="CLU_009666_3_0_1"/>
<dbReference type="InParanoid" id="P39678"/>
<dbReference type="OMA" id="IHHAAIM"/>
<dbReference type="OrthoDB" id="6718656at2759"/>
<dbReference type="BioCyc" id="YEAST:G3O-29472-MONOMER"/>
<dbReference type="BioGRID-ORCS" id="851503">
    <property type="hits" value="1 hit in 13 CRISPR screens"/>
</dbReference>
<dbReference type="EvolutionaryTrace" id="P39678"/>
<dbReference type="PRO" id="PR:P39678"/>
<dbReference type="Proteomes" id="UP000002311">
    <property type="component" value="Chromosome IV"/>
</dbReference>
<dbReference type="RNAct" id="P39678">
    <property type="molecule type" value="protein"/>
</dbReference>
<dbReference type="GO" id="GO:0030907">
    <property type="term" value="C:MBF transcription complex"/>
    <property type="evidence" value="ECO:0000314"/>
    <property type="project" value="SGD"/>
</dbReference>
<dbReference type="GO" id="GO:0005634">
    <property type="term" value="C:nucleus"/>
    <property type="evidence" value="ECO:0007005"/>
    <property type="project" value="SGD"/>
</dbReference>
<dbReference type="GO" id="GO:0033309">
    <property type="term" value="C:SBF transcription complex"/>
    <property type="evidence" value="ECO:0000318"/>
    <property type="project" value="GO_Central"/>
</dbReference>
<dbReference type="GO" id="GO:0001228">
    <property type="term" value="F:DNA-binding transcription activator activity, RNA polymerase II-specific"/>
    <property type="evidence" value="ECO:0000315"/>
    <property type="project" value="SGD"/>
</dbReference>
<dbReference type="GO" id="GO:0043565">
    <property type="term" value="F:sequence-specific DNA binding"/>
    <property type="evidence" value="ECO:0007005"/>
    <property type="project" value="SGD"/>
</dbReference>
<dbReference type="GO" id="GO:0000082">
    <property type="term" value="P:G1/S transition of mitotic cell cycle"/>
    <property type="evidence" value="ECO:0000315"/>
    <property type="project" value="SGD"/>
</dbReference>
<dbReference type="GO" id="GO:1990145">
    <property type="term" value="P:maintenance of translational fidelity"/>
    <property type="evidence" value="ECO:0000315"/>
    <property type="project" value="SGD"/>
</dbReference>
<dbReference type="GO" id="GO:0045944">
    <property type="term" value="P:positive regulation of transcription by RNA polymerase II"/>
    <property type="evidence" value="ECO:0000315"/>
    <property type="project" value="SGD"/>
</dbReference>
<dbReference type="GO" id="GO:0006355">
    <property type="term" value="P:regulation of DNA-templated transcription"/>
    <property type="evidence" value="ECO:0000303"/>
    <property type="project" value="ComplexPortal"/>
</dbReference>
<dbReference type="FunFam" id="1.25.40.20:FF:000367">
    <property type="entry name" value="Transcription factor"/>
    <property type="match status" value="1"/>
</dbReference>
<dbReference type="FunFam" id="3.10.260.10:FF:000004">
    <property type="entry name" value="Transcription factor MBP1"/>
    <property type="match status" value="1"/>
</dbReference>
<dbReference type="Gene3D" id="1.25.40.20">
    <property type="entry name" value="Ankyrin repeat-containing domain"/>
    <property type="match status" value="1"/>
</dbReference>
<dbReference type="Gene3D" id="3.10.260.10">
    <property type="entry name" value="Transcription regulator HTH, APSES-type DNA-binding domain"/>
    <property type="match status" value="1"/>
</dbReference>
<dbReference type="InterPro" id="IPR002110">
    <property type="entry name" value="Ankyrin_rpt"/>
</dbReference>
<dbReference type="InterPro" id="IPR036770">
    <property type="entry name" value="Ankyrin_rpt-contain_sf"/>
</dbReference>
<dbReference type="InterPro" id="IPR036887">
    <property type="entry name" value="HTH_APSES_sf"/>
</dbReference>
<dbReference type="InterPro" id="IPR018004">
    <property type="entry name" value="KilA/APSES_HTH"/>
</dbReference>
<dbReference type="InterPro" id="IPR051642">
    <property type="entry name" value="SWI6-like"/>
</dbReference>
<dbReference type="InterPro" id="IPR003163">
    <property type="entry name" value="Tscrpt_reg_HTH_APSES-type"/>
</dbReference>
<dbReference type="PANTHER" id="PTHR43828">
    <property type="entry name" value="ASPARAGINASE"/>
    <property type="match status" value="1"/>
</dbReference>
<dbReference type="PANTHER" id="PTHR43828:SF15">
    <property type="entry name" value="TRANSCRIPTION FACTOR MBP1"/>
    <property type="match status" value="1"/>
</dbReference>
<dbReference type="Pfam" id="PF00023">
    <property type="entry name" value="Ank"/>
    <property type="match status" value="1"/>
</dbReference>
<dbReference type="Pfam" id="PF13637">
    <property type="entry name" value="Ank_4"/>
    <property type="match status" value="1"/>
</dbReference>
<dbReference type="Pfam" id="PF04383">
    <property type="entry name" value="KilA-N"/>
    <property type="match status" value="1"/>
</dbReference>
<dbReference type="SMART" id="SM00248">
    <property type="entry name" value="ANK"/>
    <property type="match status" value="3"/>
</dbReference>
<dbReference type="SMART" id="SM01252">
    <property type="entry name" value="KilA-N"/>
    <property type="match status" value="1"/>
</dbReference>
<dbReference type="SUPFAM" id="SSF48403">
    <property type="entry name" value="Ankyrin repeat"/>
    <property type="match status" value="1"/>
</dbReference>
<dbReference type="SUPFAM" id="SSF54616">
    <property type="entry name" value="DNA-binding domain of Mlu1-box binding protein MBP1"/>
    <property type="match status" value="1"/>
</dbReference>
<dbReference type="PROSITE" id="PS50297">
    <property type="entry name" value="ANK_REP_REGION"/>
    <property type="match status" value="1"/>
</dbReference>
<dbReference type="PROSITE" id="PS50088">
    <property type="entry name" value="ANK_REPEAT"/>
    <property type="match status" value="2"/>
</dbReference>
<dbReference type="PROSITE" id="PS51299">
    <property type="entry name" value="HTH_APSES"/>
    <property type="match status" value="1"/>
</dbReference>
<comment type="function">
    <text>Binds to MCB elements (Mlu I cell cycle box) found in the promoter of most DNA synthesis genes. Transcriptional activation by MBF has an important role in the transition from G1 to S phase. It may have a dual role in that it behaves as an activator of transcription at the G1-S boundary and as a repressor during other stages of the cell cycle.</text>
</comment>
<comment type="subunit">
    <text evidence="4">Component of the transcription complex MCB-binding factor (MBF) composed of SWI6 and MBP1. Interacts with MSA1.</text>
</comment>
<comment type="interaction">
    <interactant intactId="EBI-10485">
        <id>P39678</id>
    </interactant>
    <interactant intactId="EBI-18641">
        <id>P09959</id>
        <label>SWI6</label>
    </interactant>
    <organismsDiffer>false</organismsDiffer>
    <experiments>5</experiments>
</comment>
<comment type="subcellular location">
    <subcellularLocation>
        <location>Nucleus</location>
    </subcellularLocation>
</comment>
<comment type="miscellaneous">
    <text evidence="3">Present with 521 molecules/cell in log phase SD medium.</text>
</comment>
<evidence type="ECO:0000255" key="1">
    <source>
        <dbReference type="PROSITE-ProRule" id="PRU00630"/>
    </source>
</evidence>
<evidence type="ECO:0000256" key="2">
    <source>
        <dbReference type="SAM" id="MobiDB-lite"/>
    </source>
</evidence>
<evidence type="ECO:0000269" key="3">
    <source>
    </source>
</evidence>
<evidence type="ECO:0000269" key="4">
    <source>
    </source>
</evidence>
<evidence type="ECO:0007744" key="5">
    <source>
    </source>
</evidence>
<evidence type="ECO:0007744" key="6">
    <source>
    </source>
</evidence>
<evidence type="ECO:0007829" key="7">
    <source>
        <dbReference type="PDB" id="1BM8"/>
    </source>
</evidence>
<evidence type="ECO:0007829" key="8">
    <source>
        <dbReference type="PDB" id="1L3G"/>
    </source>
</evidence>
<evidence type="ECO:0007829" key="9">
    <source>
        <dbReference type="PDB" id="1MB1"/>
    </source>
</evidence>
<accession>P39678</accession>
<accession>D6VRU0</accession>